<accession>P0DO53</accession>
<organism>
    <name type="scientific">Musa acuminata</name>
    <name type="common">Banana</name>
    <name type="synonym">Musa cavendishii</name>
    <dbReference type="NCBI Taxonomy" id="4641"/>
    <lineage>
        <taxon>Eukaryota</taxon>
        <taxon>Viridiplantae</taxon>
        <taxon>Streptophyta</taxon>
        <taxon>Embryophyta</taxon>
        <taxon>Tracheophyta</taxon>
        <taxon>Spermatophyta</taxon>
        <taxon>Magnoliopsida</taxon>
        <taxon>Liliopsida</taxon>
        <taxon>Zingiberales</taxon>
        <taxon>Musaceae</taxon>
        <taxon>Musa</taxon>
    </lineage>
</organism>
<gene>
    <name evidence="6 7" type="primary">PIP1-2</name>
</gene>
<dbReference type="EMBL" id="FF561783">
    <property type="status" value="NOT_ANNOTATED_CDS"/>
    <property type="molecule type" value="mRNA"/>
</dbReference>
<dbReference type="SMR" id="P0DO53"/>
<dbReference type="GO" id="GO:0005886">
    <property type="term" value="C:plasma membrane"/>
    <property type="evidence" value="ECO:0000314"/>
    <property type="project" value="UniProtKB"/>
</dbReference>
<dbReference type="GO" id="GO:0015267">
    <property type="term" value="F:channel activity"/>
    <property type="evidence" value="ECO:0007669"/>
    <property type="project" value="InterPro"/>
</dbReference>
<dbReference type="GO" id="GO:0009409">
    <property type="term" value="P:response to cold"/>
    <property type="evidence" value="ECO:0000314"/>
    <property type="project" value="UniProtKB"/>
</dbReference>
<dbReference type="GO" id="GO:0009651">
    <property type="term" value="P:response to salt stress"/>
    <property type="evidence" value="ECO:0000314"/>
    <property type="project" value="UniProtKB"/>
</dbReference>
<dbReference type="GO" id="GO:0009414">
    <property type="term" value="P:response to water deprivation"/>
    <property type="evidence" value="ECO:0000314"/>
    <property type="project" value="UniProtKB"/>
</dbReference>
<dbReference type="CDD" id="cd00333">
    <property type="entry name" value="MIP"/>
    <property type="match status" value="1"/>
</dbReference>
<dbReference type="FunFam" id="1.20.1080.10:FF:000001">
    <property type="entry name" value="Probable aquaporin PIP1-2"/>
    <property type="match status" value="1"/>
</dbReference>
<dbReference type="Gene3D" id="1.20.1080.10">
    <property type="entry name" value="Glycerol uptake facilitator protein"/>
    <property type="match status" value="1"/>
</dbReference>
<dbReference type="InterPro" id="IPR023271">
    <property type="entry name" value="Aquaporin-like"/>
</dbReference>
<dbReference type="InterPro" id="IPR034294">
    <property type="entry name" value="Aquaporin_transptr"/>
</dbReference>
<dbReference type="InterPro" id="IPR000425">
    <property type="entry name" value="MIP"/>
</dbReference>
<dbReference type="InterPro" id="IPR022357">
    <property type="entry name" value="MIP_CS"/>
</dbReference>
<dbReference type="NCBIfam" id="TIGR00861">
    <property type="entry name" value="MIP"/>
    <property type="match status" value="1"/>
</dbReference>
<dbReference type="PANTHER" id="PTHR45687">
    <property type="entry name" value="AQUAPORIN OR AQUAGLYCEROPORIN RELATED"/>
    <property type="match status" value="1"/>
</dbReference>
<dbReference type="Pfam" id="PF00230">
    <property type="entry name" value="MIP"/>
    <property type="match status" value="1"/>
</dbReference>
<dbReference type="PRINTS" id="PR00783">
    <property type="entry name" value="MINTRINSICP"/>
</dbReference>
<dbReference type="SUPFAM" id="SSF81338">
    <property type="entry name" value="Aquaporin-like"/>
    <property type="match status" value="1"/>
</dbReference>
<dbReference type="PROSITE" id="PS00221">
    <property type="entry name" value="MIP"/>
    <property type="match status" value="1"/>
</dbReference>
<feature type="chain" id="PRO_0000455807" description="Aquaporin PIP1-2">
    <location>
        <begin position="1"/>
        <end position="258" status="greater than"/>
    </location>
</feature>
<feature type="topological domain" description="Cytoplasmic" evidence="8">
    <location>
        <begin position="1"/>
        <end position="55"/>
    </location>
</feature>
<feature type="transmembrane region" description="Helical; Name=1" evidence="2">
    <location>
        <begin position="56"/>
        <end position="76"/>
    </location>
</feature>
<feature type="topological domain" description="Extracellular" evidence="8">
    <location>
        <begin position="77"/>
        <end position="89"/>
    </location>
</feature>
<feature type="transmembrane region" description="Helical; Name=2" evidence="2">
    <location>
        <begin position="90"/>
        <end position="110"/>
    </location>
</feature>
<feature type="topological domain" description="Cytoplasmic" evidence="8">
    <location>
        <begin position="111"/>
        <end position="133"/>
    </location>
</feature>
<feature type="transmembrane region" description="Helical; Name=3" evidence="2">
    <location>
        <begin position="134"/>
        <end position="154"/>
    </location>
</feature>
<feature type="topological domain" description="Extracellular" evidence="8">
    <location>
        <begin position="155"/>
        <end position="175"/>
    </location>
</feature>
<feature type="transmembrane region" description="Helical; Name=4" evidence="2">
    <location>
        <begin position="176"/>
        <end position="196"/>
    </location>
</feature>
<feature type="topological domain" description="Cytoplasmic" evidence="8">
    <location>
        <begin position="197"/>
        <end position="209"/>
    </location>
</feature>
<feature type="transmembrane region" description="Helical; Name=5" evidence="2">
    <location>
        <begin position="210"/>
        <end position="230"/>
    </location>
</feature>
<feature type="topological domain" description="Extracellular" evidence="8">
    <location>
        <begin position="231"/>
        <end position="258"/>
    </location>
</feature>
<feature type="region of interest" description="Disordered" evidence="3">
    <location>
        <begin position="1"/>
        <end position="37"/>
    </location>
</feature>
<feature type="short sequence motif" description="NPA 1" evidence="2">
    <location>
        <begin position="115"/>
        <end position="117"/>
    </location>
</feature>
<feature type="short sequence motif" description="NPA 2" evidence="2">
    <location>
        <begin position="236"/>
        <end position="238"/>
    </location>
</feature>
<feature type="non-terminal residue" evidence="8">
    <location>
        <position position="258"/>
    </location>
</feature>
<reference key="1">
    <citation type="submission" date="2008-04" db="EMBL/GenBank/DDBJ databases">
        <title>ESTs from drought stressed and non-stressed leaves, shoot meristem and roots of drought tolerant and drought sensitive Musa cultivars.</title>
        <authorList>
            <person name="Hearne S.J."/>
            <person name="Town C.D."/>
            <person name="Moskal W.A. Jr."/>
            <person name="Zhuang J."/>
            <person name="Viswanathan L.D."/>
            <person name="Kriga Y."/>
            <person name="Shatsman S."/>
            <person name="Shetty J."/>
            <person name="Ferguson M.E."/>
        </authorList>
    </citation>
    <scope>NUCLEOTIDE SEQUENCE [MRNA]</scope>
    <source>
        <strain>cv. Mpologoma (AAA)</strain>
        <strain>cv. Pisang Awak (ABB)</strain>
        <strain>cv. Sukari Ndizi (AB)</strain>
        <tissue>Root</tissue>
    </source>
</reference>
<reference key="2">
    <citation type="journal article" date="2015" name="Int. J. Mol. Sci.">
        <title>Genome-wide identification and expression analyses of aquaporin gene family during development and abiotic stress in banana.</title>
        <authorList>
            <person name="Hu W."/>
            <person name="Hou X."/>
            <person name="Huang C."/>
            <person name="Yan Y."/>
            <person name="Tie W."/>
            <person name="Ding Z."/>
            <person name="Wei Y."/>
            <person name="Liu J."/>
            <person name="Miao H."/>
            <person name="Lu Z."/>
            <person name="Li M."/>
            <person name="Xu B."/>
            <person name="Jin Z."/>
        </authorList>
    </citation>
    <scope>TISSUE SPECIFICITY</scope>
    <scope>GENE FAMILY</scope>
    <scope>NOMENCLATURE</scope>
    <source>
        <strain>cv. Cavendish (AAA)</strain>
    </source>
</reference>
<reference key="3">
    <citation type="journal article" date="2013" name="Plant Biotechnol. J.">
        <title>Transgenic banana plants overexpressing a native plasma membrane aquaporin MusaPIP1;2 display high tolerance levels to different abiotic stresses.</title>
        <authorList>
            <person name="Sreedharan S."/>
            <person name="Shekhawat U.K.S."/>
            <person name="Ganapathi T.R."/>
        </authorList>
    </citation>
    <scope>FUNCTION</scope>
    <scope>SUBCELLULAR LOCATION</scope>
    <scope>BIOTECHNOLOGY</scope>
    <source>
        <strain>cv. Karibale Monthan</strain>
        <strain>cv. Rasthali</strain>
    </source>
</reference>
<sequence length="258" mass="27431">MEGKEEDVRLGANKFTERQPIGTAAQSQDKDYKEPPPAPLFEPGELSSWSFYRAGIAEFVATFLFLYITILTVMGVVKSSTKCSTVGIQGIAWAFGGMIFALVYCTAGISGGHINPAVTFGLFLARKLSLTRALFYMVMQCLGAICGAGVVKGFQKGLYENNGGGANVVAPGYTKGDGLGAEIVGTFILVYTVFSATDAKRSARDSHVPILAPLPIGFAVFLVHLATIPITGTGINPARSLGAAIIYNKGHAWDDHWI</sequence>
<keyword id="KW-1003">Cell membrane</keyword>
<keyword id="KW-0472">Membrane</keyword>
<keyword id="KW-0346">Stress response</keyword>
<keyword id="KW-0812">Transmembrane</keyword>
<keyword id="KW-1133">Transmembrane helix</keyword>
<keyword id="KW-0813">Transport</keyword>
<comment type="function">
    <text evidence="1 4">Water channel required to facilitate the transport of water across cell membrane; mercury-insensitive (By similarity). Contributes to the tolerance to multiple abiotic stresses including salt (NaCl), cold and water deprivation, by modulating cytosolic K(+)/Na(+) ratio, maintaining osmotic balance, and reducing membrane injury (e.g. oxidative injury) (PubMed:23745761).</text>
</comment>
<comment type="subcellular location">
    <subcellularLocation>
        <location evidence="4">Cell membrane</location>
        <topology evidence="2">Multi-pass membrane protein</topology>
    </subcellularLocation>
</comment>
<comment type="tissue specificity">
    <text evidence="5">Barely detectable in roots, leaves and fruits.</text>
</comment>
<comment type="domain">
    <text evidence="8">Aquaporins contain two tandem repeats each containing three membrane-spanning domains and a pore-forming loop with the signature motif Asn-Pro-Ala (NPA).</text>
</comment>
<comment type="biotechnology">
    <text evidence="4">Can be used to improve resistance to abiotic stresses such as cold, drought and salt.</text>
</comment>
<comment type="similarity">
    <text evidence="8">Belongs to the MIP/aquaporin (TC 1.A.8) family. PIP (TC 1.A.8.11) subfamily.</text>
</comment>
<protein>
    <recommendedName>
        <fullName evidence="6 7">Aquaporin PIP1-2</fullName>
    </recommendedName>
    <alternativeName>
        <fullName evidence="6 7">Plasma membrane intrinsic protein 1-2</fullName>
        <shortName evidence="7">MusaPIP1-2</shortName>
        <shortName evidence="6">MusaPIP1;2</shortName>
    </alternativeName>
</protein>
<name>PIP12_MUSAC</name>
<proteinExistence type="evidence at protein level"/>
<evidence type="ECO:0000250" key="1">
    <source>
        <dbReference type="UniProtKB" id="P30302"/>
    </source>
</evidence>
<evidence type="ECO:0000255" key="2"/>
<evidence type="ECO:0000256" key="3">
    <source>
        <dbReference type="SAM" id="MobiDB-lite"/>
    </source>
</evidence>
<evidence type="ECO:0000269" key="4">
    <source>
    </source>
</evidence>
<evidence type="ECO:0000269" key="5">
    <source>
    </source>
</evidence>
<evidence type="ECO:0000303" key="6">
    <source>
    </source>
</evidence>
<evidence type="ECO:0000303" key="7">
    <source>
    </source>
</evidence>
<evidence type="ECO:0000305" key="8"/>